<evidence type="ECO:0000269" key="1">
    <source>
    </source>
</evidence>
<evidence type="ECO:0000269" key="2">
    <source>
    </source>
</evidence>
<evidence type="ECO:0000305" key="3"/>
<sequence>QPSQDFMRF</sequence>
<organism>
    <name type="scientific">Sarcophaga bullata</name>
    <name type="common">Grey flesh fly</name>
    <name type="synonym">Neobellieria bullata</name>
    <dbReference type="NCBI Taxonomy" id="7385"/>
    <lineage>
        <taxon>Eukaryota</taxon>
        <taxon>Metazoa</taxon>
        <taxon>Ecdysozoa</taxon>
        <taxon>Arthropoda</taxon>
        <taxon>Hexapoda</taxon>
        <taxon>Insecta</taxon>
        <taxon>Pterygota</taxon>
        <taxon>Neoptera</taxon>
        <taxon>Endopterygota</taxon>
        <taxon>Diptera</taxon>
        <taxon>Brachycera</taxon>
        <taxon>Muscomorpha</taxon>
        <taxon>Oestroidea</taxon>
        <taxon>Sarcophagidae</taxon>
        <taxon>Sarcophaga</taxon>
        <taxon>Neobellieria</taxon>
    </lineage>
</organism>
<accession>P83350</accession>
<comment type="function">
    <text evidence="1">Has modulatory actions at skeletal neuromuscular junctions.</text>
</comment>
<comment type="subcellular location">
    <subcellularLocation>
        <location>Secreted</location>
    </subcellularLocation>
</comment>
<comment type="mass spectrometry">
    <text>Without pyrrolidone carboxylic acid at Gln-1.</text>
</comment>
<comment type="mass spectrometry">
    <text>With pyrrolidone carboxylic acid at Gln-1.</text>
</comment>
<comment type="similarity">
    <text evidence="3">Belongs to the FARP (FMRFamide related peptide) family.</text>
</comment>
<feature type="peptide" id="PRO_0000043712" description="FMRFamide-1">
    <location>
        <begin position="1"/>
        <end position="9"/>
    </location>
</feature>
<feature type="modified residue" description="Pyrrolidone carboxylic acid; partial" evidence="1 2">
    <location>
        <position position="1"/>
    </location>
</feature>
<feature type="modified residue" description="Phenylalanine amide" evidence="1 2">
    <location>
        <position position="9"/>
    </location>
</feature>
<protein>
    <recommendedName>
        <fullName>FMRFamide-1</fullName>
    </recommendedName>
    <alternativeName>
        <fullName>Neb-FMRFamide-1</fullName>
    </alternativeName>
    <alternativeName>
        <fullName>SabFMRFamide-1</fullName>
    </alternativeName>
</protein>
<reference key="1">
    <citation type="journal article" date="2002" name="Proc. Natl. Acad. Sci. U.S.A.">
        <title>Identification in Drosophila melanogaster of the invertebrate G protein-coupled FMRFamide receptor.</title>
        <authorList>
            <person name="Meeusen T."/>
            <person name="Mertens I."/>
            <person name="Clynen E."/>
            <person name="Baggerman G."/>
            <person name="Nichols R."/>
            <person name="Nachman R.J."/>
            <person name="Huybrechts R."/>
            <person name="De Loof A."/>
            <person name="Schoofs L."/>
        </authorList>
    </citation>
    <scope>PROTEIN SEQUENCE</scope>
    <scope>FUNCTION</scope>
    <scope>PYROGLUTAMATE FORMATION AT GLN-1</scope>
    <scope>AMIDATION AT PHE-9</scope>
    <source>
        <tissue>CNS</tissue>
    </source>
</reference>
<reference key="2">
    <citation type="journal article" date="2009" name="Gen. Comp. Endocrinol.">
        <title>Extended FMRFamides in dipteran insects: conservative expression in the neuroendocrine system is accompanied by rapid sequence evolution.</title>
        <authorList>
            <person name="Rahman M.M."/>
            <person name="Fromm B."/>
            <person name="Neupert S."/>
            <person name="Kreusch S."/>
            <person name="Predel R."/>
        </authorList>
    </citation>
    <scope>PROTEIN SEQUENCE</scope>
    <scope>MASS SPECTROMETRY</scope>
    <scope>PYROGLUTAMATE FORMATION AT GLN-1</scope>
    <scope>AMIDATION AT PHE-9</scope>
    <source>
        <tissue>Dorsal ganglionic sheath</tissue>
    </source>
</reference>
<name>FAR1_SARBU</name>
<dbReference type="GO" id="GO:0005576">
    <property type="term" value="C:extracellular region"/>
    <property type="evidence" value="ECO:0007669"/>
    <property type="project" value="UniProtKB-SubCell"/>
</dbReference>
<dbReference type="GO" id="GO:0007218">
    <property type="term" value="P:neuropeptide signaling pathway"/>
    <property type="evidence" value="ECO:0007669"/>
    <property type="project" value="UniProtKB-KW"/>
</dbReference>
<proteinExistence type="evidence at protein level"/>
<keyword id="KW-0027">Amidation</keyword>
<keyword id="KW-0903">Direct protein sequencing</keyword>
<keyword id="KW-0527">Neuropeptide</keyword>
<keyword id="KW-0873">Pyrrolidone carboxylic acid</keyword>
<keyword id="KW-0964">Secreted</keyword>